<evidence type="ECO:0000250" key="1"/>
<evidence type="ECO:0000255" key="2"/>
<evidence type="ECO:0000305" key="3"/>
<protein>
    <recommendedName>
        <fullName>Mitochondrial zinc maintenance protein 1, mitochondrial</fullName>
    </recommendedName>
</protein>
<feature type="transit peptide" description="Mitochondrion" evidence="2">
    <location>
        <begin position="1"/>
        <end position="35"/>
    </location>
</feature>
<feature type="chain" id="PRO_0000405495" description="Mitochondrial zinc maintenance protein 1, mitochondrial">
    <location>
        <begin position="36"/>
        <end position="115"/>
    </location>
</feature>
<comment type="function">
    <text evidence="1">Assembly factor required for Rieske Fe-S protein RIP1 incorporation into the cytochrome b-c1 (CIII) complex. Functions as a chaperone, binding to this subunit within the mitochondrial matrix and stabilizing it prior to its translocation and insertion into the late CIII dimeric intermediate within the mitochondrial inner membrane. Modulates the mitochondrial matrix zinc pool (By similarity).</text>
</comment>
<comment type="subunit">
    <text evidence="1">Interacts with RIP1.</text>
</comment>
<comment type="subcellular location">
    <subcellularLocation>
        <location evidence="1">Mitochondrion matrix</location>
    </subcellularLocation>
</comment>
<comment type="similarity">
    <text evidence="3">Belongs to the complex I LYR family. MZM1 subfamily.</text>
</comment>
<proteinExistence type="inferred from homology"/>
<accession>Q6CTI7</accession>
<sequence>MSQALGAYRNGLRAARVAFKGDLRMLMAARQQMRESMVNPPNPELPPDQQIKLMNDVAQFLRQNVVQGKRTKDDKYHLNIHKDTELGDNETIKTTKKTLAAQGGGCCGGGAGLYK</sequence>
<name>MZM1_KLULA</name>
<gene>
    <name type="primary">MZM1</name>
    <name type="ordered locus">KLLA0C12419g</name>
</gene>
<dbReference type="EMBL" id="CR382123">
    <property type="protein sequence ID" value="CAH01603.1"/>
    <property type="molecule type" value="Genomic_DNA"/>
</dbReference>
<dbReference type="RefSeq" id="XP_452752.1">
    <property type="nucleotide sequence ID" value="XM_452752.1"/>
</dbReference>
<dbReference type="SMR" id="Q6CTI7"/>
<dbReference type="FunCoup" id="Q6CTI7">
    <property type="interactions" value="28"/>
</dbReference>
<dbReference type="STRING" id="284590.Q6CTI7"/>
<dbReference type="PaxDb" id="284590-Q6CTI7"/>
<dbReference type="KEGG" id="kla:KLLA0_C12419g"/>
<dbReference type="eggNOG" id="ENOG502S6EF">
    <property type="taxonomic scope" value="Eukaryota"/>
</dbReference>
<dbReference type="HOGENOM" id="CLU_147114_2_2_1"/>
<dbReference type="InParanoid" id="Q6CTI7"/>
<dbReference type="OMA" id="KYKLRIH"/>
<dbReference type="Proteomes" id="UP000000598">
    <property type="component" value="Chromosome C"/>
</dbReference>
<dbReference type="GO" id="GO:0005759">
    <property type="term" value="C:mitochondrial matrix"/>
    <property type="evidence" value="ECO:0007669"/>
    <property type="project" value="UniProtKB-SubCell"/>
</dbReference>
<dbReference type="GO" id="GO:0044183">
    <property type="term" value="F:protein folding chaperone"/>
    <property type="evidence" value="ECO:0007669"/>
    <property type="project" value="TreeGrafter"/>
</dbReference>
<dbReference type="GO" id="GO:0034551">
    <property type="term" value="P:mitochondrial respiratory chain complex III assembly"/>
    <property type="evidence" value="ECO:0007669"/>
    <property type="project" value="InterPro"/>
</dbReference>
<dbReference type="CDD" id="cd20267">
    <property type="entry name" value="Complex1_LYR_LYRM7"/>
    <property type="match status" value="1"/>
</dbReference>
<dbReference type="InterPro" id="IPR045298">
    <property type="entry name" value="Complex1_LYR_LYRM7"/>
</dbReference>
<dbReference type="InterPro" id="IPR050435">
    <property type="entry name" value="MZM1/LYRM7"/>
</dbReference>
<dbReference type="PANTHER" id="PTHR46749">
    <property type="entry name" value="COMPLEX III ASSEMBLY FACTOR LYRM7"/>
    <property type="match status" value="1"/>
</dbReference>
<dbReference type="PANTHER" id="PTHR46749:SF1">
    <property type="entry name" value="COMPLEX III ASSEMBLY FACTOR LYRM7"/>
    <property type="match status" value="1"/>
</dbReference>
<reference key="1">
    <citation type="journal article" date="2004" name="Nature">
        <title>Genome evolution in yeasts.</title>
        <authorList>
            <person name="Dujon B."/>
            <person name="Sherman D."/>
            <person name="Fischer G."/>
            <person name="Durrens P."/>
            <person name="Casaregola S."/>
            <person name="Lafontaine I."/>
            <person name="de Montigny J."/>
            <person name="Marck C."/>
            <person name="Neuveglise C."/>
            <person name="Talla E."/>
            <person name="Goffard N."/>
            <person name="Frangeul L."/>
            <person name="Aigle M."/>
            <person name="Anthouard V."/>
            <person name="Babour A."/>
            <person name="Barbe V."/>
            <person name="Barnay S."/>
            <person name="Blanchin S."/>
            <person name="Beckerich J.-M."/>
            <person name="Beyne E."/>
            <person name="Bleykasten C."/>
            <person name="Boisrame A."/>
            <person name="Boyer J."/>
            <person name="Cattolico L."/>
            <person name="Confanioleri F."/>
            <person name="de Daruvar A."/>
            <person name="Despons L."/>
            <person name="Fabre E."/>
            <person name="Fairhead C."/>
            <person name="Ferry-Dumazet H."/>
            <person name="Groppi A."/>
            <person name="Hantraye F."/>
            <person name="Hennequin C."/>
            <person name="Jauniaux N."/>
            <person name="Joyet P."/>
            <person name="Kachouri R."/>
            <person name="Kerrest A."/>
            <person name="Koszul R."/>
            <person name="Lemaire M."/>
            <person name="Lesur I."/>
            <person name="Ma L."/>
            <person name="Muller H."/>
            <person name="Nicaud J.-M."/>
            <person name="Nikolski M."/>
            <person name="Oztas S."/>
            <person name="Ozier-Kalogeropoulos O."/>
            <person name="Pellenz S."/>
            <person name="Potier S."/>
            <person name="Richard G.-F."/>
            <person name="Straub M.-L."/>
            <person name="Suleau A."/>
            <person name="Swennen D."/>
            <person name="Tekaia F."/>
            <person name="Wesolowski-Louvel M."/>
            <person name="Westhof E."/>
            <person name="Wirth B."/>
            <person name="Zeniou-Meyer M."/>
            <person name="Zivanovic Y."/>
            <person name="Bolotin-Fukuhara M."/>
            <person name="Thierry A."/>
            <person name="Bouchier C."/>
            <person name="Caudron B."/>
            <person name="Scarpelli C."/>
            <person name="Gaillardin C."/>
            <person name="Weissenbach J."/>
            <person name="Wincker P."/>
            <person name="Souciet J.-L."/>
        </authorList>
    </citation>
    <scope>NUCLEOTIDE SEQUENCE [LARGE SCALE GENOMIC DNA]</scope>
    <source>
        <strain>ATCC 8585 / CBS 2359 / DSM 70799 / NBRC 1267 / NRRL Y-1140 / WM37</strain>
    </source>
</reference>
<organism>
    <name type="scientific">Kluyveromyces lactis (strain ATCC 8585 / CBS 2359 / DSM 70799 / NBRC 1267 / NRRL Y-1140 / WM37)</name>
    <name type="common">Yeast</name>
    <name type="synonym">Candida sphaerica</name>
    <dbReference type="NCBI Taxonomy" id="284590"/>
    <lineage>
        <taxon>Eukaryota</taxon>
        <taxon>Fungi</taxon>
        <taxon>Dikarya</taxon>
        <taxon>Ascomycota</taxon>
        <taxon>Saccharomycotina</taxon>
        <taxon>Saccharomycetes</taxon>
        <taxon>Saccharomycetales</taxon>
        <taxon>Saccharomycetaceae</taxon>
        <taxon>Kluyveromyces</taxon>
    </lineage>
</organism>
<keyword id="KW-0143">Chaperone</keyword>
<keyword id="KW-0496">Mitochondrion</keyword>
<keyword id="KW-1185">Reference proteome</keyword>
<keyword id="KW-0809">Transit peptide</keyword>